<dbReference type="EMBL" id="CP001138">
    <property type="protein sequence ID" value="ACH48951.1"/>
    <property type="molecule type" value="Genomic_DNA"/>
</dbReference>
<dbReference type="RefSeq" id="WP_000586566.1">
    <property type="nucleotide sequence ID" value="NC_011149.1"/>
</dbReference>
<dbReference type="SMR" id="B5F8H5"/>
<dbReference type="KEGG" id="sea:SeAg_B3660"/>
<dbReference type="HOGENOM" id="CLU_186759_1_0_6"/>
<dbReference type="Proteomes" id="UP000008819">
    <property type="component" value="Chromosome"/>
</dbReference>
<dbReference type="Gene3D" id="1.10.10.610">
    <property type="entry name" value="YehU-like"/>
    <property type="match status" value="1"/>
</dbReference>
<dbReference type="HAMAP" id="MF_00690">
    <property type="entry name" value="UPF0270"/>
    <property type="match status" value="1"/>
</dbReference>
<dbReference type="InterPro" id="IPR010648">
    <property type="entry name" value="UPF0270"/>
</dbReference>
<dbReference type="InterPro" id="IPR036685">
    <property type="entry name" value="YehU-like_sf"/>
</dbReference>
<dbReference type="NCBIfam" id="NF003438">
    <property type="entry name" value="PRK04966.1"/>
    <property type="match status" value="1"/>
</dbReference>
<dbReference type="Pfam" id="PF06794">
    <property type="entry name" value="UPF0270"/>
    <property type="match status" value="1"/>
</dbReference>
<dbReference type="PIRSF" id="PIRSF006169">
    <property type="entry name" value="UCP006169"/>
    <property type="match status" value="1"/>
</dbReference>
<dbReference type="SUPFAM" id="SSF118001">
    <property type="entry name" value="YehU-like"/>
    <property type="match status" value="1"/>
</dbReference>
<protein>
    <recommendedName>
        <fullName evidence="1">UPF0270 protein YheU</fullName>
    </recommendedName>
</protein>
<feature type="chain" id="PRO_1000132019" description="UPF0270 protein YheU">
    <location>
        <begin position="1"/>
        <end position="72"/>
    </location>
</feature>
<sequence length="72" mass="8384">MIIPWQGLAPDTLDNLIESFVLREGTDYGEHERSFEQKVADVKRQLQSGEAVLVWSELHETVNIMPKKQFRE</sequence>
<name>YHEU_SALA4</name>
<accession>B5F8H5</accession>
<proteinExistence type="inferred from homology"/>
<reference key="1">
    <citation type="journal article" date="2011" name="J. Bacteriol.">
        <title>Comparative genomics of 28 Salmonella enterica isolates: evidence for CRISPR-mediated adaptive sublineage evolution.</title>
        <authorList>
            <person name="Fricke W.F."/>
            <person name="Mammel M.K."/>
            <person name="McDermott P.F."/>
            <person name="Tartera C."/>
            <person name="White D.G."/>
            <person name="Leclerc J.E."/>
            <person name="Ravel J."/>
            <person name="Cebula T.A."/>
        </authorList>
    </citation>
    <scope>NUCLEOTIDE SEQUENCE [LARGE SCALE GENOMIC DNA]</scope>
    <source>
        <strain>SL483</strain>
    </source>
</reference>
<gene>
    <name evidence="1" type="primary">yheU</name>
    <name type="ordered locus">SeAg_B3660</name>
</gene>
<organism>
    <name type="scientific">Salmonella agona (strain SL483)</name>
    <dbReference type="NCBI Taxonomy" id="454166"/>
    <lineage>
        <taxon>Bacteria</taxon>
        <taxon>Pseudomonadati</taxon>
        <taxon>Pseudomonadota</taxon>
        <taxon>Gammaproteobacteria</taxon>
        <taxon>Enterobacterales</taxon>
        <taxon>Enterobacteriaceae</taxon>
        <taxon>Salmonella</taxon>
    </lineage>
</organism>
<evidence type="ECO:0000255" key="1">
    <source>
        <dbReference type="HAMAP-Rule" id="MF_00690"/>
    </source>
</evidence>
<comment type="similarity">
    <text evidence="1">Belongs to the UPF0270 family.</text>
</comment>